<keyword id="KW-0963">Cytoplasm</keyword>
<keyword id="KW-0501">Molybdenum cofactor biosynthesis</keyword>
<keyword id="KW-1185">Reference proteome</keyword>
<keyword id="KW-0808">Transferase</keyword>
<organism>
    <name type="scientific">Neurospora crassa (strain ATCC 24698 / 74-OR23-1A / CBS 708.71 / DSM 1257 / FGSC 987)</name>
    <dbReference type="NCBI Taxonomy" id="367110"/>
    <lineage>
        <taxon>Eukaryota</taxon>
        <taxon>Fungi</taxon>
        <taxon>Dikarya</taxon>
        <taxon>Ascomycota</taxon>
        <taxon>Pezizomycotina</taxon>
        <taxon>Sordariomycetes</taxon>
        <taxon>Sordariomycetidae</taxon>
        <taxon>Sordariales</taxon>
        <taxon>Sordariaceae</taxon>
        <taxon>Neurospora</taxon>
    </lineage>
</organism>
<dbReference type="EC" id="2.8.1.12" evidence="1"/>
<dbReference type="EMBL" id="BX842636">
    <property type="protein sequence ID" value="CAE76538.1"/>
    <property type="molecule type" value="Genomic_DNA"/>
</dbReference>
<dbReference type="EMBL" id="CM002236">
    <property type="protein sequence ID" value="EAA35340.1"/>
    <property type="molecule type" value="Genomic_DNA"/>
</dbReference>
<dbReference type="RefSeq" id="XP_964576.1">
    <property type="nucleotide sequence ID" value="XM_959483.2"/>
</dbReference>
<dbReference type="SMR" id="Q7SEW2"/>
<dbReference type="STRING" id="367110.Q7SEW2"/>
<dbReference type="PaxDb" id="5141-EFNCRP00000002859"/>
<dbReference type="EnsemblFungi" id="EAA35340">
    <property type="protein sequence ID" value="EAA35340"/>
    <property type="gene ID" value="NCU03170"/>
</dbReference>
<dbReference type="GeneID" id="3880716"/>
<dbReference type="KEGG" id="ncr:NCU03170"/>
<dbReference type="VEuPathDB" id="FungiDB:NCU03170"/>
<dbReference type="HOGENOM" id="CLU_089568_3_0_1"/>
<dbReference type="InParanoid" id="Q7SEW2"/>
<dbReference type="OMA" id="WKREEFG"/>
<dbReference type="OrthoDB" id="5531344at2759"/>
<dbReference type="UniPathway" id="UPA00344"/>
<dbReference type="Proteomes" id="UP000001805">
    <property type="component" value="Chromosome 1, Linkage Group I"/>
</dbReference>
<dbReference type="GO" id="GO:0005829">
    <property type="term" value="C:cytosol"/>
    <property type="evidence" value="ECO:0000318"/>
    <property type="project" value="GO_Central"/>
</dbReference>
<dbReference type="GO" id="GO:1990140">
    <property type="term" value="C:molybdopterin synthase complex"/>
    <property type="evidence" value="ECO:0000250"/>
    <property type="project" value="UniProtKB"/>
</dbReference>
<dbReference type="GO" id="GO:0030366">
    <property type="term" value="F:molybdopterin synthase activity"/>
    <property type="evidence" value="ECO:0007669"/>
    <property type="project" value="UniProtKB-UniRule"/>
</dbReference>
<dbReference type="GO" id="GO:0006777">
    <property type="term" value="P:Mo-molybdopterin cofactor biosynthetic process"/>
    <property type="evidence" value="ECO:0000250"/>
    <property type="project" value="UniProtKB"/>
</dbReference>
<dbReference type="CDD" id="cd00756">
    <property type="entry name" value="MoaE"/>
    <property type="match status" value="1"/>
</dbReference>
<dbReference type="FunFam" id="3.90.1170.40:FF:000003">
    <property type="entry name" value="Molybdopterin converting factor subunit 2"/>
    <property type="match status" value="1"/>
</dbReference>
<dbReference type="Gene3D" id="3.90.1170.40">
    <property type="entry name" value="Molybdopterin biosynthesis MoaE subunit"/>
    <property type="match status" value="1"/>
</dbReference>
<dbReference type="HAMAP" id="MF_03052">
    <property type="entry name" value="MOC2B"/>
    <property type="match status" value="1"/>
</dbReference>
<dbReference type="InterPro" id="IPR036563">
    <property type="entry name" value="MoaE_sf"/>
</dbReference>
<dbReference type="InterPro" id="IPR028888">
    <property type="entry name" value="MOCS2B_euk"/>
</dbReference>
<dbReference type="InterPro" id="IPR003448">
    <property type="entry name" value="Mopterin_biosynth_MoaE"/>
</dbReference>
<dbReference type="PANTHER" id="PTHR23404">
    <property type="entry name" value="MOLYBDOPTERIN SYNTHASE RELATED"/>
    <property type="match status" value="1"/>
</dbReference>
<dbReference type="Pfam" id="PF02391">
    <property type="entry name" value="MoaE"/>
    <property type="match status" value="1"/>
</dbReference>
<dbReference type="SUPFAM" id="SSF54690">
    <property type="entry name" value="Molybdopterin synthase subunit MoaE"/>
    <property type="match status" value="1"/>
</dbReference>
<protein>
    <recommendedName>
        <fullName evidence="1">Molybdopterin synthase catalytic subunit</fullName>
        <ecNumber evidence="1">2.8.1.12</ecNumber>
    </recommendedName>
    <alternativeName>
        <fullName evidence="1">Common component for nitrate reductase and xanthine dehydrogenase protein H</fullName>
    </alternativeName>
    <alternativeName>
        <fullName evidence="1">Molybdenum cofactor synthesis protein 2 large subunit</fullName>
    </alternativeName>
    <alternativeName>
        <fullName evidence="1">Molybdenum cofactor synthesis protein 2B</fullName>
        <shortName evidence="1">MOCS2B</shortName>
    </alternativeName>
    <alternativeName>
        <fullName>Nitrate nonutilizer protein 8</fullName>
    </alternativeName>
</protein>
<accession>Q7SEW2</accession>
<sequence>MATQQPTQTDNSAQAQPPQTNPAKPTEISEPGIYVALTHDHLNYQSVIDRVRSPEAGAIVVFAGTTRNNFNSLPVQHLSYTSYAPLALRTMLTICRSILTKHGLKGIAMVHRLGVVPIGEESILIAVSSPHRQAAWRAGEEALEECKAKVEVWKREEFGGEGGGVWRANRDGAVGVKVDEPRIGKGEVDEKEDEGDSGNGGNDRKS</sequence>
<proteinExistence type="inferred from homology"/>
<reference key="1">
    <citation type="journal article" date="2003" name="Nucleic Acids Res.">
        <title>What's in the genome of a filamentous fungus? Analysis of the Neurospora genome sequence.</title>
        <authorList>
            <person name="Mannhaupt G."/>
            <person name="Montrone C."/>
            <person name="Haase D."/>
            <person name="Mewes H.-W."/>
            <person name="Aign V."/>
            <person name="Hoheisel J.D."/>
            <person name="Fartmann B."/>
            <person name="Nyakatura G."/>
            <person name="Kempken F."/>
            <person name="Maier J."/>
            <person name="Schulte U."/>
        </authorList>
    </citation>
    <scope>NUCLEOTIDE SEQUENCE [LARGE SCALE GENOMIC DNA]</scope>
    <source>
        <strain>ATCC 24698 / 74-OR23-1A / CBS 708.71 / DSM 1257 / FGSC 987</strain>
    </source>
</reference>
<reference key="2">
    <citation type="journal article" date="2003" name="Nature">
        <title>The genome sequence of the filamentous fungus Neurospora crassa.</title>
        <authorList>
            <person name="Galagan J.E."/>
            <person name="Calvo S.E."/>
            <person name="Borkovich K.A."/>
            <person name="Selker E.U."/>
            <person name="Read N.D."/>
            <person name="Jaffe D.B."/>
            <person name="FitzHugh W."/>
            <person name="Ma L.-J."/>
            <person name="Smirnov S."/>
            <person name="Purcell S."/>
            <person name="Rehman B."/>
            <person name="Elkins T."/>
            <person name="Engels R."/>
            <person name="Wang S."/>
            <person name="Nielsen C.B."/>
            <person name="Butler J."/>
            <person name="Endrizzi M."/>
            <person name="Qui D."/>
            <person name="Ianakiev P."/>
            <person name="Bell-Pedersen D."/>
            <person name="Nelson M.A."/>
            <person name="Werner-Washburne M."/>
            <person name="Selitrennikoff C.P."/>
            <person name="Kinsey J.A."/>
            <person name="Braun E.L."/>
            <person name="Zelter A."/>
            <person name="Schulte U."/>
            <person name="Kothe G.O."/>
            <person name="Jedd G."/>
            <person name="Mewes H.-W."/>
            <person name="Staben C."/>
            <person name="Marcotte E."/>
            <person name="Greenberg D."/>
            <person name="Roy A."/>
            <person name="Foley K."/>
            <person name="Naylor J."/>
            <person name="Stange-Thomann N."/>
            <person name="Barrett R."/>
            <person name="Gnerre S."/>
            <person name="Kamal M."/>
            <person name="Kamvysselis M."/>
            <person name="Mauceli E.W."/>
            <person name="Bielke C."/>
            <person name="Rudd S."/>
            <person name="Frishman D."/>
            <person name="Krystofova S."/>
            <person name="Rasmussen C."/>
            <person name="Metzenberg R.L."/>
            <person name="Perkins D.D."/>
            <person name="Kroken S."/>
            <person name="Cogoni C."/>
            <person name="Macino G."/>
            <person name="Catcheside D.E.A."/>
            <person name="Li W."/>
            <person name="Pratt R.J."/>
            <person name="Osmani S.A."/>
            <person name="DeSouza C.P.C."/>
            <person name="Glass N.L."/>
            <person name="Orbach M.J."/>
            <person name="Berglund J.A."/>
            <person name="Voelker R."/>
            <person name="Yarden O."/>
            <person name="Plamann M."/>
            <person name="Seiler S."/>
            <person name="Dunlap J.C."/>
            <person name="Radford A."/>
            <person name="Aramayo R."/>
            <person name="Natvig D.O."/>
            <person name="Alex L.A."/>
            <person name="Mannhaupt G."/>
            <person name="Ebbole D.J."/>
            <person name="Freitag M."/>
            <person name="Paulsen I."/>
            <person name="Sachs M.S."/>
            <person name="Lander E.S."/>
            <person name="Nusbaum C."/>
            <person name="Birren B.W."/>
        </authorList>
    </citation>
    <scope>NUCLEOTIDE SEQUENCE [LARGE SCALE GENOMIC DNA]</scope>
    <source>
        <strain>ATCC 24698 / 74-OR23-1A / CBS 708.71 / DSM 1257 / FGSC 987</strain>
    </source>
</reference>
<reference key="3">
    <citation type="journal article" date="1980" name="Genetics">
        <title>The isolation and characterization of mutants defective in nitrate assimilation in Neurospora crassa.</title>
        <authorList>
            <person name="Tomsett A.B."/>
            <person name="Garrett R.H."/>
        </authorList>
    </citation>
    <scope>GENE NAME</scope>
</reference>
<feature type="chain" id="PRO_0000369358" description="Molybdopterin synthase catalytic subunit">
    <location>
        <begin position="1"/>
        <end position="206"/>
    </location>
</feature>
<feature type="region of interest" description="Disordered" evidence="2">
    <location>
        <begin position="1"/>
        <end position="27"/>
    </location>
</feature>
<feature type="region of interest" description="Disordered" evidence="2">
    <location>
        <begin position="177"/>
        <end position="206"/>
    </location>
</feature>
<feature type="compositionally biased region" description="Polar residues" evidence="2">
    <location>
        <begin position="1"/>
        <end position="23"/>
    </location>
</feature>
<feature type="compositionally biased region" description="Basic and acidic residues" evidence="2">
    <location>
        <begin position="177"/>
        <end position="188"/>
    </location>
</feature>
<feature type="compositionally biased region" description="Gly residues" evidence="2">
    <location>
        <begin position="197"/>
        <end position="206"/>
    </location>
</feature>
<feature type="binding site" evidence="1">
    <location>
        <begin position="131"/>
        <end position="132"/>
    </location>
    <ligand>
        <name>substrate</name>
    </ligand>
</feature>
<feature type="binding site" evidence="1">
    <location>
        <position position="147"/>
    </location>
    <ligand>
        <name>substrate</name>
    </ligand>
</feature>
<feature type="binding site" evidence="1">
    <location>
        <begin position="154"/>
        <end position="156"/>
    </location>
    <ligand>
        <name>substrate</name>
    </ligand>
</feature>
<evidence type="ECO:0000255" key="1">
    <source>
        <dbReference type="HAMAP-Rule" id="MF_03052"/>
    </source>
</evidence>
<evidence type="ECO:0000256" key="2">
    <source>
        <dbReference type="SAM" id="MobiDB-lite"/>
    </source>
</evidence>
<comment type="function">
    <text evidence="1">Catalytic subunit of the molybdopterin synthase complex, a complex that catalyzes the conversion of precursor Z into molybdopterin. Acts by mediating the incorporation of 2 sulfur atoms from thiocarboxylated MOCS2A into precursor Z to generate a dithiolene group.</text>
</comment>
<comment type="catalytic activity">
    <reaction evidence="1">
        <text>2 [molybdopterin-synthase sulfur-carrier protein]-C-terminal-Gly-aminoethanethioate + cyclic pyranopterin phosphate + H2O = molybdopterin + 2 [molybdopterin-synthase sulfur-carrier protein]-C-terminal Gly-Gly + 2 H(+)</text>
        <dbReference type="Rhea" id="RHEA:26333"/>
        <dbReference type="Rhea" id="RHEA-COMP:12202"/>
        <dbReference type="Rhea" id="RHEA-COMP:19907"/>
        <dbReference type="ChEBI" id="CHEBI:15377"/>
        <dbReference type="ChEBI" id="CHEBI:15378"/>
        <dbReference type="ChEBI" id="CHEBI:58698"/>
        <dbReference type="ChEBI" id="CHEBI:59648"/>
        <dbReference type="ChEBI" id="CHEBI:90778"/>
        <dbReference type="ChEBI" id="CHEBI:232372"/>
        <dbReference type="EC" id="2.8.1.12"/>
    </reaction>
</comment>
<comment type="pathway">
    <text evidence="1">Cofactor biosynthesis; molybdopterin biosynthesis.</text>
</comment>
<comment type="subunit">
    <text evidence="1">Heterotetramer; composed of 2 small (MOCS2A) and 2 large (MOCS2B) subunits.</text>
</comment>
<comment type="subcellular location">
    <subcellularLocation>
        <location evidence="1">Cytoplasm</location>
    </subcellularLocation>
</comment>
<comment type="similarity">
    <text evidence="1">Belongs to the MoaE family. MOCS2B subfamily.</text>
</comment>
<gene>
    <name type="primary">nit-8</name>
    <name type="ORF">7C14.140</name>
    <name type="ORF">NCU03170</name>
</gene>
<name>MOC2B_NEUCR</name>